<name>IF2_BIFLS</name>
<gene>
    <name evidence="2" type="primary">infB</name>
    <name type="ordered locus">Blon_2198</name>
    <name type="ordered locus">BLIJ_2272</name>
</gene>
<feature type="chain" id="PRO_1000118751" description="Translation initiation factor IF-2">
    <location>
        <begin position="1"/>
        <end position="986"/>
    </location>
</feature>
<feature type="domain" description="tr-type G">
    <location>
        <begin position="479"/>
        <end position="651"/>
    </location>
</feature>
<feature type="region of interest" description="Disordered" evidence="3">
    <location>
        <begin position="49"/>
        <end position="370"/>
    </location>
</feature>
<feature type="region of interest" description="G1" evidence="1">
    <location>
        <begin position="488"/>
        <end position="495"/>
    </location>
</feature>
<feature type="region of interest" description="G2" evidence="1">
    <location>
        <begin position="513"/>
        <end position="517"/>
    </location>
</feature>
<feature type="region of interest" description="G3" evidence="1">
    <location>
        <begin position="538"/>
        <end position="541"/>
    </location>
</feature>
<feature type="region of interest" description="G4" evidence="1">
    <location>
        <begin position="592"/>
        <end position="595"/>
    </location>
</feature>
<feature type="region of interest" description="G5" evidence="1">
    <location>
        <begin position="628"/>
        <end position="630"/>
    </location>
</feature>
<feature type="compositionally biased region" description="Basic and acidic residues" evidence="3">
    <location>
        <begin position="49"/>
        <end position="59"/>
    </location>
</feature>
<feature type="compositionally biased region" description="Low complexity" evidence="3">
    <location>
        <begin position="60"/>
        <end position="112"/>
    </location>
</feature>
<feature type="compositionally biased region" description="Basic and acidic residues" evidence="3">
    <location>
        <begin position="135"/>
        <end position="168"/>
    </location>
</feature>
<feature type="compositionally biased region" description="Low complexity" evidence="3">
    <location>
        <begin position="170"/>
        <end position="182"/>
    </location>
</feature>
<feature type="compositionally biased region" description="Gly residues" evidence="3">
    <location>
        <begin position="254"/>
        <end position="286"/>
    </location>
</feature>
<feature type="compositionally biased region" description="Gly residues" evidence="3">
    <location>
        <begin position="296"/>
        <end position="353"/>
    </location>
</feature>
<feature type="compositionally biased region" description="Basic residues" evidence="3">
    <location>
        <begin position="357"/>
        <end position="366"/>
    </location>
</feature>
<feature type="binding site" evidence="2">
    <location>
        <begin position="488"/>
        <end position="495"/>
    </location>
    <ligand>
        <name>GTP</name>
        <dbReference type="ChEBI" id="CHEBI:37565"/>
    </ligand>
</feature>
<feature type="binding site" evidence="2">
    <location>
        <begin position="538"/>
        <end position="542"/>
    </location>
    <ligand>
        <name>GTP</name>
        <dbReference type="ChEBI" id="CHEBI:37565"/>
    </ligand>
</feature>
<feature type="binding site" evidence="2">
    <location>
        <begin position="592"/>
        <end position="595"/>
    </location>
    <ligand>
        <name>GTP</name>
        <dbReference type="ChEBI" id="CHEBI:37565"/>
    </ligand>
</feature>
<comment type="function">
    <text evidence="2">One of the essential components for the initiation of protein synthesis. Protects formylmethionyl-tRNA from spontaneous hydrolysis and promotes its binding to the 30S ribosomal subunits. Also involved in the hydrolysis of GTP during the formation of the 70S ribosomal complex.</text>
</comment>
<comment type="subcellular location">
    <subcellularLocation>
        <location evidence="2">Cytoplasm</location>
    </subcellularLocation>
</comment>
<comment type="similarity">
    <text evidence="2">Belongs to the TRAFAC class translation factor GTPase superfamily. Classic translation factor GTPase family. IF-2 subfamily.</text>
</comment>
<protein>
    <recommendedName>
        <fullName evidence="2">Translation initiation factor IF-2</fullName>
    </recommendedName>
</protein>
<reference key="1">
    <citation type="journal article" date="2008" name="Proc. Natl. Acad. Sci. U.S.A.">
        <title>The genome sequence of Bifidobacterium longum subsp. infantis reveals adaptations for milk utilization within the infant microbiome.</title>
        <authorList>
            <person name="Sela D.A."/>
            <person name="Chapman J."/>
            <person name="Adeuya A."/>
            <person name="Kim J.H."/>
            <person name="Chen F."/>
            <person name="Whitehead T.R."/>
            <person name="Lapidus A."/>
            <person name="Rokhsar D.S."/>
            <person name="Lebrilla C.B."/>
            <person name="German J.B."/>
            <person name="Price N.P."/>
            <person name="Richardson P.M."/>
            <person name="Mills D.A."/>
        </authorList>
    </citation>
    <scope>NUCLEOTIDE SEQUENCE [LARGE SCALE GENOMIC DNA]</scope>
    <source>
        <strain>ATCC 15697 / DSM 20088 / JCM 1222 / NCTC 11817 / S12</strain>
    </source>
</reference>
<reference key="2">
    <citation type="journal article" date="2011" name="Nature">
        <title>Bifidobacteria can protect from enteropathogenic infection through production of acetate.</title>
        <authorList>
            <person name="Fukuda S."/>
            <person name="Toh H."/>
            <person name="Hase K."/>
            <person name="Oshima K."/>
            <person name="Nakanishi Y."/>
            <person name="Yoshimura K."/>
            <person name="Tobe T."/>
            <person name="Clarke J.M."/>
            <person name="Topping D.L."/>
            <person name="Suzuki T."/>
            <person name="Taylor T.D."/>
            <person name="Itoh K."/>
            <person name="Kikuchi J."/>
            <person name="Morita H."/>
            <person name="Hattori M."/>
            <person name="Ohno H."/>
        </authorList>
    </citation>
    <scope>NUCLEOTIDE SEQUENCE [LARGE SCALE GENOMIC DNA]</scope>
    <source>
        <strain>ATCC 15697 / DSM 20088 / JCM 1222 / NCTC 11817 / S12</strain>
    </source>
</reference>
<sequence length="986" mass="104973">MAKPRVYELAKVLNVDSKTVLEKLKDMGEFVKSASSTIEPPVARRLKAEFAKDNAKGDSKPASSAQKPAAKPVQQRRPAAPSAPASTSSSAPTPAAPARQASPASAHQQAPTPGAPTPRPQGGARPGMPTPGRHGQHDNRENGRDNREGRENGRQSRPNDRRNNDRRNNQGRPNNGQPGQHQNNRDNASAPRPHAQGGAGANGGNAASNAIPRPHAQGPRPGNNPFSRKQGMHTPTPGDIPRPHPMARPTADSGRGGRPGRPGQGQGQGRGFRGGRPGQGGQGGPRPGQWGHNRPGQGGGSQGAGQGGARGGFRGGQGGGNNFQGGGAPSNGPARGGGRGGRGGAAGAFGRQGGKSSKARKNRLAKRHEYEELKAPTIGGVRIPNGNGQTIRLRQGASLADLAEKINVNQAALVTVLFHLGQMATATQSLDEETFQILGGEIGWNIQLVSAEEEDKELLQQFDINLDEEELQDDEDLKPRPPVVTVMGHVDHGKTRLLDTIRKTNVIAREAGGITQRIGAYQVTVNLEGEPRKITFLDTPGHEAFTAMRARGAELTDVAILVVAADDGVMPQTVEAINHAQAAKVPIVVAVNKIDVPGANPEKVRGQLTEFGLVPEEYGGDTMFVDISAKQNLHVDKLLEAVLLTADAELDLRANPDMDARGATVEARLDKGRGAVATVLVQQGTLHVGDAIVAGTSYGRVRAMLDENGQPMEAAGPSTPVQVLGLTSVPTAGDLFLVASDDRAARQIAEKRQATERAAQLAKRRKVVSLEDFKKKFAESEIDMLNIVIKGDSSGSVEALEDSLMKIEVSDEVGIQVIHRGVGAITQNDVNLATVDKAVIIGFNVRPNRQVADLAEREGVEIKYYSVIYRAIEDIEASLKGMLKPEYEEVVTSHSEIREIFRSSKFGNIAGVMVQDGEVKRGTKCRILRNGVATVNDLEISSLRRFKDDVQSVKEGYEAGINLGTFNDIELGDIIETFEMQEVERK</sequence>
<evidence type="ECO:0000250" key="1"/>
<evidence type="ECO:0000255" key="2">
    <source>
        <dbReference type="HAMAP-Rule" id="MF_00100"/>
    </source>
</evidence>
<evidence type="ECO:0000256" key="3">
    <source>
        <dbReference type="SAM" id="MobiDB-lite"/>
    </source>
</evidence>
<accession>B7GNA3</accession>
<accession>E8MN46</accession>
<dbReference type="EMBL" id="CP001095">
    <property type="protein sequence ID" value="ACJ53259.1"/>
    <property type="molecule type" value="Genomic_DNA"/>
</dbReference>
<dbReference type="EMBL" id="AP010889">
    <property type="protein sequence ID" value="BAJ69849.1"/>
    <property type="molecule type" value="Genomic_DNA"/>
</dbReference>
<dbReference type="RefSeq" id="WP_012578457.1">
    <property type="nucleotide sequence ID" value="NC_011593.1"/>
</dbReference>
<dbReference type="SMR" id="B7GNA3"/>
<dbReference type="KEGG" id="bln:Blon_2198"/>
<dbReference type="KEGG" id="blon:BLIJ_2272"/>
<dbReference type="PATRIC" id="fig|391904.8.peg.2273"/>
<dbReference type="HOGENOM" id="CLU_006301_9_1_11"/>
<dbReference type="Proteomes" id="UP000001360">
    <property type="component" value="Chromosome"/>
</dbReference>
<dbReference type="GO" id="GO:0005829">
    <property type="term" value="C:cytosol"/>
    <property type="evidence" value="ECO:0007669"/>
    <property type="project" value="TreeGrafter"/>
</dbReference>
<dbReference type="GO" id="GO:0005525">
    <property type="term" value="F:GTP binding"/>
    <property type="evidence" value="ECO:0007669"/>
    <property type="project" value="UniProtKB-KW"/>
</dbReference>
<dbReference type="GO" id="GO:0003924">
    <property type="term" value="F:GTPase activity"/>
    <property type="evidence" value="ECO:0007669"/>
    <property type="project" value="UniProtKB-UniRule"/>
</dbReference>
<dbReference type="GO" id="GO:0003743">
    <property type="term" value="F:translation initiation factor activity"/>
    <property type="evidence" value="ECO:0007669"/>
    <property type="project" value="UniProtKB-UniRule"/>
</dbReference>
<dbReference type="CDD" id="cd01887">
    <property type="entry name" value="IF2_eIF5B"/>
    <property type="match status" value="1"/>
</dbReference>
<dbReference type="CDD" id="cd03702">
    <property type="entry name" value="IF2_mtIF2_II"/>
    <property type="match status" value="1"/>
</dbReference>
<dbReference type="CDD" id="cd03692">
    <property type="entry name" value="mtIF2_IVc"/>
    <property type="match status" value="1"/>
</dbReference>
<dbReference type="FunFam" id="2.40.30.10:FF:000007">
    <property type="entry name" value="Translation initiation factor IF-2"/>
    <property type="match status" value="1"/>
</dbReference>
<dbReference type="FunFam" id="2.40.30.10:FF:000008">
    <property type="entry name" value="Translation initiation factor IF-2"/>
    <property type="match status" value="1"/>
</dbReference>
<dbReference type="FunFam" id="3.40.50.10050:FF:000001">
    <property type="entry name" value="Translation initiation factor IF-2"/>
    <property type="match status" value="1"/>
</dbReference>
<dbReference type="FunFam" id="3.40.50.300:FF:000019">
    <property type="entry name" value="Translation initiation factor IF-2"/>
    <property type="match status" value="1"/>
</dbReference>
<dbReference type="Gene3D" id="1.10.10.2480">
    <property type="match status" value="1"/>
</dbReference>
<dbReference type="Gene3D" id="3.40.50.300">
    <property type="entry name" value="P-loop containing nucleotide triphosphate hydrolases"/>
    <property type="match status" value="1"/>
</dbReference>
<dbReference type="Gene3D" id="2.40.30.10">
    <property type="entry name" value="Translation factors"/>
    <property type="match status" value="2"/>
</dbReference>
<dbReference type="Gene3D" id="3.40.50.10050">
    <property type="entry name" value="Translation initiation factor IF- 2, domain 3"/>
    <property type="match status" value="1"/>
</dbReference>
<dbReference type="HAMAP" id="MF_00100_B">
    <property type="entry name" value="IF_2_B"/>
    <property type="match status" value="1"/>
</dbReference>
<dbReference type="InterPro" id="IPR053905">
    <property type="entry name" value="EF-G-like_DII"/>
</dbReference>
<dbReference type="InterPro" id="IPR044145">
    <property type="entry name" value="IF2_II"/>
</dbReference>
<dbReference type="InterPro" id="IPR006847">
    <property type="entry name" value="IF2_N"/>
</dbReference>
<dbReference type="InterPro" id="IPR027417">
    <property type="entry name" value="P-loop_NTPase"/>
</dbReference>
<dbReference type="InterPro" id="IPR005225">
    <property type="entry name" value="Small_GTP-bd"/>
</dbReference>
<dbReference type="InterPro" id="IPR000795">
    <property type="entry name" value="T_Tr_GTP-bd_dom"/>
</dbReference>
<dbReference type="InterPro" id="IPR000178">
    <property type="entry name" value="TF_IF2_bacterial-like"/>
</dbReference>
<dbReference type="InterPro" id="IPR015760">
    <property type="entry name" value="TIF_IF2"/>
</dbReference>
<dbReference type="InterPro" id="IPR023115">
    <property type="entry name" value="TIF_IF2_dom3"/>
</dbReference>
<dbReference type="InterPro" id="IPR036925">
    <property type="entry name" value="TIF_IF2_dom3_sf"/>
</dbReference>
<dbReference type="InterPro" id="IPR009000">
    <property type="entry name" value="Transl_B-barrel_sf"/>
</dbReference>
<dbReference type="NCBIfam" id="TIGR00487">
    <property type="entry name" value="IF-2"/>
    <property type="match status" value="1"/>
</dbReference>
<dbReference type="NCBIfam" id="TIGR00231">
    <property type="entry name" value="small_GTP"/>
    <property type="match status" value="1"/>
</dbReference>
<dbReference type="PANTHER" id="PTHR43381:SF5">
    <property type="entry name" value="TR-TYPE G DOMAIN-CONTAINING PROTEIN"/>
    <property type="match status" value="1"/>
</dbReference>
<dbReference type="PANTHER" id="PTHR43381">
    <property type="entry name" value="TRANSLATION INITIATION FACTOR IF-2-RELATED"/>
    <property type="match status" value="1"/>
</dbReference>
<dbReference type="Pfam" id="PF22042">
    <property type="entry name" value="EF-G_D2"/>
    <property type="match status" value="1"/>
</dbReference>
<dbReference type="Pfam" id="PF00009">
    <property type="entry name" value="GTP_EFTU"/>
    <property type="match status" value="1"/>
</dbReference>
<dbReference type="Pfam" id="PF11987">
    <property type="entry name" value="IF-2"/>
    <property type="match status" value="1"/>
</dbReference>
<dbReference type="Pfam" id="PF04760">
    <property type="entry name" value="IF2_N"/>
    <property type="match status" value="2"/>
</dbReference>
<dbReference type="PRINTS" id="PR00315">
    <property type="entry name" value="ELONGATNFCT"/>
</dbReference>
<dbReference type="SUPFAM" id="SSF52156">
    <property type="entry name" value="Initiation factor IF2/eIF5b, domain 3"/>
    <property type="match status" value="1"/>
</dbReference>
<dbReference type="SUPFAM" id="SSF52540">
    <property type="entry name" value="P-loop containing nucleoside triphosphate hydrolases"/>
    <property type="match status" value="1"/>
</dbReference>
<dbReference type="SUPFAM" id="SSF50447">
    <property type="entry name" value="Translation proteins"/>
    <property type="match status" value="2"/>
</dbReference>
<dbReference type="PROSITE" id="PS51722">
    <property type="entry name" value="G_TR_2"/>
    <property type="match status" value="1"/>
</dbReference>
<organism>
    <name type="scientific">Bifidobacterium longum subsp. infantis (strain ATCC 15697 / DSM 20088 / JCM 1222 / NCTC 11817 / S12)</name>
    <dbReference type="NCBI Taxonomy" id="391904"/>
    <lineage>
        <taxon>Bacteria</taxon>
        <taxon>Bacillati</taxon>
        <taxon>Actinomycetota</taxon>
        <taxon>Actinomycetes</taxon>
        <taxon>Bifidobacteriales</taxon>
        <taxon>Bifidobacteriaceae</taxon>
        <taxon>Bifidobacterium</taxon>
    </lineage>
</organism>
<keyword id="KW-0963">Cytoplasm</keyword>
<keyword id="KW-0342">GTP-binding</keyword>
<keyword id="KW-0396">Initiation factor</keyword>
<keyword id="KW-0547">Nucleotide-binding</keyword>
<keyword id="KW-0648">Protein biosynthesis</keyword>
<proteinExistence type="inferred from homology"/>